<proteinExistence type="inferred from homology"/>
<feature type="chain" id="PRO_1000005895" description="DNA-directed RNA polymerase subunit omega">
    <location>
        <begin position="1"/>
        <end position="133"/>
    </location>
</feature>
<accession>A5VPI8</accession>
<dbReference type="EC" id="2.7.7.6" evidence="1"/>
<dbReference type="EMBL" id="CP000708">
    <property type="protein sequence ID" value="ABQ60125.1"/>
    <property type="molecule type" value="Genomic_DNA"/>
</dbReference>
<dbReference type="RefSeq" id="WP_002963795.1">
    <property type="nucleotide sequence ID" value="NC_009505.1"/>
</dbReference>
<dbReference type="SMR" id="A5VPI8"/>
<dbReference type="GeneID" id="93016943"/>
<dbReference type="KEGG" id="bov:BOV_0644"/>
<dbReference type="HOGENOM" id="CLU_125406_2_0_5"/>
<dbReference type="PhylomeDB" id="A5VPI8"/>
<dbReference type="Proteomes" id="UP000006383">
    <property type="component" value="Chromosome I"/>
</dbReference>
<dbReference type="GO" id="GO:0000428">
    <property type="term" value="C:DNA-directed RNA polymerase complex"/>
    <property type="evidence" value="ECO:0007669"/>
    <property type="project" value="UniProtKB-KW"/>
</dbReference>
<dbReference type="GO" id="GO:0003677">
    <property type="term" value="F:DNA binding"/>
    <property type="evidence" value="ECO:0007669"/>
    <property type="project" value="UniProtKB-UniRule"/>
</dbReference>
<dbReference type="GO" id="GO:0003899">
    <property type="term" value="F:DNA-directed RNA polymerase activity"/>
    <property type="evidence" value="ECO:0007669"/>
    <property type="project" value="UniProtKB-UniRule"/>
</dbReference>
<dbReference type="GO" id="GO:0006351">
    <property type="term" value="P:DNA-templated transcription"/>
    <property type="evidence" value="ECO:0007669"/>
    <property type="project" value="UniProtKB-UniRule"/>
</dbReference>
<dbReference type="Gene3D" id="3.90.940.10">
    <property type="match status" value="1"/>
</dbReference>
<dbReference type="HAMAP" id="MF_00366">
    <property type="entry name" value="RNApol_bact_RpoZ"/>
    <property type="match status" value="1"/>
</dbReference>
<dbReference type="InterPro" id="IPR003716">
    <property type="entry name" value="DNA-dir_RNA_pol_omega"/>
</dbReference>
<dbReference type="InterPro" id="IPR006110">
    <property type="entry name" value="Pol_omega/Rpo6/RPB6"/>
</dbReference>
<dbReference type="InterPro" id="IPR036161">
    <property type="entry name" value="RPB6/omega-like_sf"/>
</dbReference>
<dbReference type="NCBIfam" id="TIGR00690">
    <property type="entry name" value="rpoZ"/>
    <property type="match status" value="1"/>
</dbReference>
<dbReference type="PANTHER" id="PTHR34476">
    <property type="entry name" value="DNA-DIRECTED RNA POLYMERASE SUBUNIT OMEGA"/>
    <property type="match status" value="1"/>
</dbReference>
<dbReference type="PANTHER" id="PTHR34476:SF1">
    <property type="entry name" value="DNA-DIRECTED RNA POLYMERASE SUBUNIT OMEGA"/>
    <property type="match status" value="1"/>
</dbReference>
<dbReference type="Pfam" id="PF01192">
    <property type="entry name" value="RNA_pol_Rpb6"/>
    <property type="match status" value="1"/>
</dbReference>
<dbReference type="SMART" id="SM01409">
    <property type="entry name" value="RNA_pol_Rpb6"/>
    <property type="match status" value="1"/>
</dbReference>
<dbReference type="SUPFAM" id="SSF63562">
    <property type="entry name" value="RPB6/omega subunit-like"/>
    <property type="match status" value="1"/>
</dbReference>
<keyword id="KW-0240">DNA-directed RNA polymerase</keyword>
<keyword id="KW-0548">Nucleotidyltransferase</keyword>
<keyword id="KW-0804">Transcription</keyword>
<keyword id="KW-0808">Transferase</keyword>
<gene>
    <name evidence="1" type="primary">rpoZ</name>
    <name type="ordered locus">BOV_0644</name>
</gene>
<name>RPOZ_BRUO2</name>
<sequence length="133" mass="14514">MARVTVEDCVDKVENRFELVLLAGHRARQISQGAPITVDRDNDKNPVVALREIADETLSPDDLKEDLIHSLQKHVEVDEPEAAPAQIANAAEEIAEGIAEAGEEDVVTFDRMSEEELLAGIEGLVAPEKNDGF</sequence>
<evidence type="ECO:0000255" key="1">
    <source>
        <dbReference type="HAMAP-Rule" id="MF_00366"/>
    </source>
</evidence>
<reference key="1">
    <citation type="journal article" date="2009" name="PLoS ONE">
        <title>Genome degradation in Brucella ovis corresponds with narrowing of its host range and tissue tropism.</title>
        <authorList>
            <person name="Tsolis R.M."/>
            <person name="Seshadri R."/>
            <person name="Santos R.L."/>
            <person name="Sangari F.J."/>
            <person name="Lobo J.M."/>
            <person name="de Jong M.F."/>
            <person name="Ren Q."/>
            <person name="Myers G."/>
            <person name="Brinkac L.M."/>
            <person name="Nelson W.C."/>
            <person name="Deboy R.T."/>
            <person name="Angiuoli S."/>
            <person name="Khouri H."/>
            <person name="Dimitrov G."/>
            <person name="Robinson J.R."/>
            <person name="Mulligan S."/>
            <person name="Walker R.L."/>
            <person name="Elzer P.E."/>
            <person name="Hassan K.A."/>
            <person name="Paulsen I.T."/>
        </authorList>
    </citation>
    <scope>NUCLEOTIDE SEQUENCE [LARGE SCALE GENOMIC DNA]</scope>
    <source>
        <strain>ATCC 25840 / 63/290 / NCTC 10512</strain>
    </source>
</reference>
<protein>
    <recommendedName>
        <fullName evidence="1">DNA-directed RNA polymerase subunit omega</fullName>
        <shortName evidence="1">RNAP omega subunit</shortName>
        <ecNumber evidence="1">2.7.7.6</ecNumber>
    </recommendedName>
    <alternativeName>
        <fullName evidence="1">RNA polymerase omega subunit</fullName>
    </alternativeName>
    <alternativeName>
        <fullName evidence="1">Transcriptase subunit omega</fullName>
    </alternativeName>
</protein>
<organism>
    <name type="scientific">Brucella ovis (strain ATCC 25840 / 63/290 / NCTC 10512)</name>
    <dbReference type="NCBI Taxonomy" id="444178"/>
    <lineage>
        <taxon>Bacteria</taxon>
        <taxon>Pseudomonadati</taxon>
        <taxon>Pseudomonadota</taxon>
        <taxon>Alphaproteobacteria</taxon>
        <taxon>Hyphomicrobiales</taxon>
        <taxon>Brucellaceae</taxon>
        <taxon>Brucella/Ochrobactrum group</taxon>
        <taxon>Brucella</taxon>
    </lineage>
</organism>
<comment type="function">
    <text evidence="1">Promotes RNA polymerase assembly. Latches the N- and C-terminal regions of the beta' subunit thereby facilitating its interaction with the beta and alpha subunits.</text>
</comment>
<comment type="catalytic activity">
    <reaction evidence="1">
        <text>RNA(n) + a ribonucleoside 5'-triphosphate = RNA(n+1) + diphosphate</text>
        <dbReference type="Rhea" id="RHEA:21248"/>
        <dbReference type="Rhea" id="RHEA-COMP:14527"/>
        <dbReference type="Rhea" id="RHEA-COMP:17342"/>
        <dbReference type="ChEBI" id="CHEBI:33019"/>
        <dbReference type="ChEBI" id="CHEBI:61557"/>
        <dbReference type="ChEBI" id="CHEBI:140395"/>
        <dbReference type="EC" id="2.7.7.6"/>
    </reaction>
</comment>
<comment type="subunit">
    <text evidence="1">The RNAP catalytic core consists of 2 alpha, 1 beta, 1 beta' and 1 omega subunit. When a sigma factor is associated with the core the holoenzyme is formed, which can initiate transcription.</text>
</comment>
<comment type="similarity">
    <text evidence="1">Belongs to the RNA polymerase subunit omega family.</text>
</comment>